<comment type="function">
    <text evidence="1">Pyrophosphatase that catalyzes the hydrolysis of nucleoside triphosphates to their monophosphate derivatives, with a high preference for the non-canonical purine nucleotides XTP (xanthosine triphosphate), dITP (deoxyinosine triphosphate) and ITP. Seems to function as a house-cleaning enzyme that removes non-canonical purine nucleotides from the nucleotide pool, thus preventing their incorporation into DNA/RNA and avoiding chromosomal lesions.</text>
</comment>
<comment type="catalytic activity">
    <reaction evidence="1">
        <text>XTP + H2O = XMP + diphosphate + H(+)</text>
        <dbReference type="Rhea" id="RHEA:28610"/>
        <dbReference type="ChEBI" id="CHEBI:15377"/>
        <dbReference type="ChEBI" id="CHEBI:15378"/>
        <dbReference type="ChEBI" id="CHEBI:33019"/>
        <dbReference type="ChEBI" id="CHEBI:57464"/>
        <dbReference type="ChEBI" id="CHEBI:61314"/>
        <dbReference type="EC" id="3.6.1.66"/>
    </reaction>
</comment>
<comment type="catalytic activity">
    <reaction evidence="1">
        <text>dITP + H2O = dIMP + diphosphate + H(+)</text>
        <dbReference type="Rhea" id="RHEA:28342"/>
        <dbReference type="ChEBI" id="CHEBI:15377"/>
        <dbReference type="ChEBI" id="CHEBI:15378"/>
        <dbReference type="ChEBI" id="CHEBI:33019"/>
        <dbReference type="ChEBI" id="CHEBI:61194"/>
        <dbReference type="ChEBI" id="CHEBI:61382"/>
        <dbReference type="EC" id="3.6.1.66"/>
    </reaction>
</comment>
<comment type="catalytic activity">
    <reaction evidence="1">
        <text>ITP + H2O = IMP + diphosphate + H(+)</text>
        <dbReference type="Rhea" id="RHEA:29399"/>
        <dbReference type="ChEBI" id="CHEBI:15377"/>
        <dbReference type="ChEBI" id="CHEBI:15378"/>
        <dbReference type="ChEBI" id="CHEBI:33019"/>
        <dbReference type="ChEBI" id="CHEBI:58053"/>
        <dbReference type="ChEBI" id="CHEBI:61402"/>
        <dbReference type="EC" id="3.6.1.66"/>
    </reaction>
</comment>
<comment type="cofactor">
    <cofactor evidence="1">
        <name>Mg(2+)</name>
        <dbReference type="ChEBI" id="CHEBI:18420"/>
    </cofactor>
    <text evidence="1">Binds 1 Mg(2+) ion per subunit.</text>
</comment>
<comment type="subunit">
    <text evidence="1">Homodimer.</text>
</comment>
<comment type="similarity">
    <text evidence="1">Belongs to the HAM1 NTPase family.</text>
</comment>
<proteinExistence type="inferred from homology"/>
<protein>
    <recommendedName>
        <fullName evidence="1">dITP/XTP pyrophosphatase</fullName>
        <ecNumber evidence="1">3.6.1.66</ecNumber>
    </recommendedName>
    <alternativeName>
        <fullName evidence="1">Non-canonical purine NTP pyrophosphatase</fullName>
    </alternativeName>
    <alternativeName>
        <fullName evidence="1">Non-standard purine NTP pyrophosphatase</fullName>
    </alternativeName>
    <alternativeName>
        <fullName evidence="1">Nucleoside-triphosphate diphosphatase</fullName>
    </alternativeName>
    <alternativeName>
        <fullName evidence="1">Nucleoside-triphosphate pyrophosphatase</fullName>
        <shortName evidence="1">NTPase</shortName>
    </alternativeName>
</protein>
<keyword id="KW-0378">Hydrolase</keyword>
<keyword id="KW-0460">Magnesium</keyword>
<keyword id="KW-0479">Metal-binding</keyword>
<keyword id="KW-0546">Nucleotide metabolism</keyword>
<keyword id="KW-0547">Nucleotide-binding</keyword>
<name>IXTPA_BARHE</name>
<evidence type="ECO:0000255" key="1">
    <source>
        <dbReference type="HAMAP-Rule" id="MF_01405"/>
    </source>
</evidence>
<gene>
    <name type="ordered locus">BH00540</name>
</gene>
<reference key="1">
    <citation type="journal article" date="2004" name="Proc. Natl. Acad. Sci. U.S.A.">
        <title>The louse-borne human pathogen Bartonella quintana is a genomic derivative of the zoonotic agent Bartonella henselae.</title>
        <authorList>
            <person name="Alsmark U.C.M."/>
            <person name="Frank A.C."/>
            <person name="Karlberg E.O."/>
            <person name="Legault B.-A."/>
            <person name="Ardell D.H."/>
            <person name="Canbaeck B."/>
            <person name="Eriksson A.-S."/>
            <person name="Naeslund A.K."/>
            <person name="Handley S.A."/>
            <person name="Huvet M."/>
            <person name="La Scola B."/>
            <person name="Holmberg M."/>
            <person name="Andersson S.G.E."/>
        </authorList>
    </citation>
    <scope>NUCLEOTIDE SEQUENCE [LARGE SCALE GENOMIC DNA]</scope>
    <source>
        <strain>ATCC 49882 / DSM 28221 / CCUG 30454 / Houston 1</strain>
    </source>
</reference>
<dbReference type="EC" id="3.6.1.66" evidence="1"/>
<dbReference type="EMBL" id="BX897699">
    <property type="protein sequence ID" value="CAF26870.1"/>
    <property type="molecule type" value="Genomic_DNA"/>
</dbReference>
<dbReference type="SMR" id="Q6G565"/>
<dbReference type="PaxDb" id="283166-BH00540"/>
<dbReference type="EnsemblBacteria" id="CAF26870">
    <property type="protein sequence ID" value="CAF26870"/>
    <property type="gene ID" value="BH00540"/>
</dbReference>
<dbReference type="KEGG" id="bhe:BH00540"/>
<dbReference type="eggNOG" id="COG0127">
    <property type="taxonomic scope" value="Bacteria"/>
</dbReference>
<dbReference type="OrthoDB" id="9807456at2"/>
<dbReference type="Proteomes" id="UP000000421">
    <property type="component" value="Chromosome"/>
</dbReference>
<dbReference type="GO" id="GO:0005829">
    <property type="term" value="C:cytosol"/>
    <property type="evidence" value="ECO:0007669"/>
    <property type="project" value="TreeGrafter"/>
</dbReference>
<dbReference type="GO" id="GO:0035870">
    <property type="term" value="F:dITP diphosphatase activity"/>
    <property type="evidence" value="ECO:0007669"/>
    <property type="project" value="RHEA"/>
</dbReference>
<dbReference type="GO" id="GO:0036220">
    <property type="term" value="F:ITP diphosphatase activity"/>
    <property type="evidence" value="ECO:0007669"/>
    <property type="project" value="UniProtKB-EC"/>
</dbReference>
<dbReference type="GO" id="GO:0046872">
    <property type="term" value="F:metal ion binding"/>
    <property type="evidence" value="ECO:0007669"/>
    <property type="project" value="UniProtKB-KW"/>
</dbReference>
<dbReference type="GO" id="GO:0000166">
    <property type="term" value="F:nucleotide binding"/>
    <property type="evidence" value="ECO:0007669"/>
    <property type="project" value="UniProtKB-KW"/>
</dbReference>
<dbReference type="GO" id="GO:0017111">
    <property type="term" value="F:ribonucleoside triphosphate phosphatase activity"/>
    <property type="evidence" value="ECO:0007669"/>
    <property type="project" value="InterPro"/>
</dbReference>
<dbReference type="GO" id="GO:0036222">
    <property type="term" value="F:XTP diphosphatase activity"/>
    <property type="evidence" value="ECO:0007669"/>
    <property type="project" value="RHEA"/>
</dbReference>
<dbReference type="GO" id="GO:0009117">
    <property type="term" value="P:nucleotide metabolic process"/>
    <property type="evidence" value="ECO:0007669"/>
    <property type="project" value="UniProtKB-KW"/>
</dbReference>
<dbReference type="GO" id="GO:0009146">
    <property type="term" value="P:purine nucleoside triphosphate catabolic process"/>
    <property type="evidence" value="ECO:0007669"/>
    <property type="project" value="UniProtKB-UniRule"/>
</dbReference>
<dbReference type="CDD" id="cd00515">
    <property type="entry name" value="HAM1"/>
    <property type="match status" value="1"/>
</dbReference>
<dbReference type="FunFam" id="3.90.950.10:FF:000001">
    <property type="entry name" value="dITP/XTP pyrophosphatase"/>
    <property type="match status" value="1"/>
</dbReference>
<dbReference type="Gene3D" id="3.90.950.10">
    <property type="match status" value="1"/>
</dbReference>
<dbReference type="HAMAP" id="MF_01405">
    <property type="entry name" value="Non_canon_purine_NTPase"/>
    <property type="match status" value="1"/>
</dbReference>
<dbReference type="InterPro" id="IPR020922">
    <property type="entry name" value="dITP/XTP_pyrophosphatase"/>
</dbReference>
<dbReference type="InterPro" id="IPR029001">
    <property type="entry name" value="ITPase-like_fam"/>
</dbReference>
<dbReference type="InterPro" id="IPR002637">
    <property type="entry name" value="RdgB/HAM1"/>
</dbReference>
<dbReference type="NCBIfam" id="TIGR00042">
    <property type="entry name" value="RdgB/HAM1 family non-canonical purine NTP pyrophosphatase"/>
    <property type="match status" value="1"/>
</dbReference>
<dbReference type="PANTHER" id="PTHR11067:SF9">
    <property type="entry name" value="INOSINE TRIPHOSPHATE PYROPHOSPHATASE"/>
    <property type="match status" value="1"/>
</dbReference>
<dbReference type="PANTHER" id="PTHR11067">
    <property type="entry name" value="INOSINE TRIPHOSPHATE PYROPHOSPHATASE/HAM1 PROTEIN"/>
    <property type="match status" value="1"/>
</dbReference>
<dbReference type="Pfam" id="PF01725">
    <property type="entry name" value="Ham1p_like"/>
    <property type="match status" value="1"/>
</dbReference>
<dbReference type="SUPFAM" id="SSF52972">
    <property type="entry name" value="ITPase-like"/>
    <property type="match status" value="1"/>
</dbReference>
<feature type="chain" id="PRO_0000178131" description="dITP/XTP pyrophosphatase">
    <location>
        <begin position="1"/>
        <end position="215"/>
    </location>
</feature>
<feature type="active site" description="Proton acceptor" evidence="1">
    <location>
        <position position="74"/>
    </location>
</feature>
<feature type="binding site" evidence="1">
    <location>
        <begin position="13"/>
        <end position="18"/>
    </location>
    <ligand>
        <name>substrate</name>
    </ligand>
</feature>
<feature type="binding site" evidence="1">
    <location>
        <position position="74"/>
    </location>
    <ligand>
        <name>Mg(2+)</name>
        <dbReference type="ChEBI" id="CHEBI:18420"/>
    </ligand>
</feature>
<feature type="binding site" evidence="1">
    <location>
        <position position="75"/>
    </location>
    <ligand>
        <name>substrate</name>
    </ligand>
</feature>
<feature type="binding site" evidence="1">
    <location>
        <begin position="163"/>
        <end position="166"/>
    </location>
    <ligand>
        <name>substrate</name>
    </ligand>
</feature>
<feature type="binding site" evidence="1">
    <location>
        <position position="186"/>
    </location>
    <ligand>
        <name>substrate</name>
    </ligand>
</feature>
<feature type="binding site" evidence="1">
    <location>
        <begin position="199"/>
        <end position="200"/>
    </location>
    <ligand>
        <name>substrate</name>
    </ligand>
</feature>
<organism>
    <name type="scientific">Bartonella henselae (strain ATCC 49882 / DSM 28221 / CCUG 30454 / Houston 1)</name>
    <name type="common">Rochalimaea henselae</name>
    <dbReference type="NCBI Taxonomy" id="283166"/>
    <lineage>
        <taxon>Bacteria</taxon>
        <taxon>Pseudomonadati</taxon>
        <taxon>Pseudomonadota</taxon>
        <taxon>Alphaproteobacteria</taxon>
        <taxon>Hyphomicrobiales</taxon>
        <taxon>Bartonellaceae</taxon>
        <taxon>Bartonella</taxon>
    </lineage>
</organism>
<accession>Q6G565</accession>
<sequence length="215" mass="23662">MRSIANKKLVIATHNIGKLQEITTLVAPFGLTIQSAKELGLPEPKETGTTFEENAYIKAFAAAKNTGLPALSDDSGLEVDALNGAPGVYTADLALQSDGTRDFLKAMQKIEEKLQKIGAHKKSQRKCRFISVICIAWPDAHADYFHGRVEGSFIWPPRGDKGFGFDPVFLPDGYKNTFGEMTTEQKHGWKLNDQTPLSHRACAFKLLAENLLKLS</sequence>